<feature type="chain" id="PRO_1000070834" description="Cytochrome c-type biogenesis protein CcmE">
    <location>
        <begin position="1"/>
        <end position="151"/>
    </location>
</feature>
<feature type="topological domain" description="Cytoplasmic" evidence="1">
    <location>
        <begin position="1"/>
        <end position="8"/>
    </location>
</feature>
<feature type="transmembrane region" description="Helical; Signal-anchor for type II membrane protein" evidence="1">
    <location>
        <begin position="9"/>
        <end position="29"/>
    </location>
</feature>
<feature type="topological domain" description="Periplasmic" evidence="1">
    <location>
        <begin position="30"/>
        <end position="151"/>
    </location>
</feature>
<feature type="binding site" description="covalent" evidence="1">
    <location>
        <position position="124"/>
    </location>
    <ligand>
        <name>heme</name>
        <dbReference type="ChEBI" id="CHEBI:30413"/>
    </ligand>
</feature>
<feature type="binding site" description="axial binding residue" evidence="1">
    <location>
        <position position="128"/>
    </location>
    <ligand>
        <name>heme</name>
        <dbReference type="ChEBI" id="CHEBI:30413"/>
    </ligand>
    <ligandPart>
        <name>Fe</name>
        <dbReference type="ChEBI" id="CHEBI:18248"/>
    </ligandPart>
</feature>
<reference key="1">
    <citation type="submission" date="2007-05" db="EMBL/GenBank/DDBJ databases">
        <title>Complete sequence of Pseudomonas putida F1.</title>
        <authorList>
            <consortium name="US DOE Joint Genome Institute"/>
            <person name="Copeland A."/>
            <person name="Lucas S."/>
            <person name="Lapidus A."/>
            <person name="Barry K."/>
            <person name="Detter J.C."/>
            <person name="Glavina del Rio T."/>
            <person name="Hammon N."/>
            <person name="Israni S."/>
            <person name="Dalin E."/>
            <person name="Tice H."/>
            <person name="Pitluck S."/>
            <person name="Chain P."/>
            <person name="Malfatti S."/>
            <person name="Shin M."/>
            <person name="Vergez L."/>
            <person name="Schmutz J."/>
            <person name="Larimer F."/>
            <person name="Land M."/>
            <person name="Hauser L."/>
            <person name="Kyrpides N."/>
            <person name="Lykidis A."/>
            <person name="Parales R."/>
            <person name="Richardson P."/>
        </authorList>
    </citation>
    <scope>NUCLEOTIDE SEQUENCE [LARGE SCALE GENOMIC DNA]</scope>
    <source>
        <strain>ATCC 700007 / DSM 6899 / JCM 31910 / BCRC 17059 / LMG 24140 / F1</strain>
    </source>
</reference>
<keyword id="KW-0997">Cell inner membrane</keyword>
<keyword id="KW-1003">Cell membrane</keyword>
<keyword id="KW-0201">Cytochrome c-type biogenesis</keyword>
<keyword id="KW-0349">Heme</keyword>
<keyword id="KW-0408">Iron</keyword>
<keyword id="KW-0472">Membrane</keyword>
<keyword id="KW-0479">Metal-binding</keyword>
<keyword id="KW-0735">Signal-anchor</keyword>
<keyword id="KW-0812">Transmembrane</keyword>
<keyword id="KW-1133">Transmembrane helix</keyword>
<organism>
    <name type="scientific">Pseudomonas putida (strain ATCC 700007 / DSM 6899 / JCM 31910 / BCRC 17059 / LMG 24140 / F1)</name>
    <dbReference type="NCBI Taxonomy" id="351746"/>
    <lineage>
        <taxon>Bacteria</taxon>
        <taxon>Pseudomonadati</taxon>
        <taxon>Pseudomonadota</taxon>
        <taxon>Gammaproteobacteria</taxon>
        <taxon>Pseudomonadales</taxon>
        <taxon>Pseudomonadaceae</taxon>
        <taxon>Pseudomonas</taxon>
    </lineage>
</organism>
<comment type="function">
    <text evidence="1">Heme chaperone required for the biogenesis of c-type cytochromes. Transiently binds heme delivered by CcmC and transfers the heme to apo-cytochromes in a process facilitated by CcmF and CcmH.</text>
</comment>
<comment type="subcellular location">
    <subcellularLocation>
        <location evidence="1">Cell inner membrane</location>
        <topology evidence="1">Single-pass type II membrane protein</topology>
        <orientation evidence="1">Periplasmic side</orientation>
    </subcellularLocation>
</comment>
<comment type="similarity">
    <text evidence="1">Belongs to the CcmE/CycJ family.</text>
</comment>
<name>CCME_PSEP1</name>
<dbReference type="EMBL" id="CP000712">
    <property type="protein sequence ID" value="ABQ77701.1"/>
    <property type="molecule type" value="Genomic_DNA"/>
</dbReference>
<dbReference type="SMR" id="A5W0P1"/>
<dbReference type="KEGG" id="ppf:Pput_1544"/>
<dbReference type="eggNOG" id="COG2332">
    <property type="taxonomic scope" value="Bacteria"/>
</dbReference>
<dbReference type="HOGENOM" id="CLU_079503_1_1_6"/>
<dbReference type="GO" id="GO:0005886">
    <property type="term" value="C:plasma membrane"/>
    <property type="evidence" value="ECO:0007669"/>
    <property type="project" value="UniProtKB-SubCell"/>
</dbReference>
<dbReference type="GO" id="GO:0020037">
    <property type="term" value="F:heme binding"/>
    <property type="evidence" value="ECO:0007669"/>
    <property type="project" value="InterPro"/>
</dbReference>
<dbReference type="GO" id="GO:0046872">
    <property type="term" value="F:metal ion binding"/>
    <property type="evidence" value="ECO:0007669"/>
    <property type="project" value="UniProtKB-KW"/>
</dbReference>
<dbReference type="GO" id="GO:0017004">
    <property type="term" value="P:cytochrome complex assembly"/>
    <property type="evidence" value="ECO:0007669"/>
    <property type="project" value="UniProtKB-KW"/>
</dbReference>
<dbReference type="FunFam" id="2.40.50.140:FF:000104">
    <property type="entry name" value="Cytochrome c-type biogenesis protein CcmE"/>
    <property type="match status" value="1"/>
</dbReference>
<dbReference type="Gene3D" id="2.40.50.140">
    <property type="entry name" value="Nucleic acid-binding proteins"/>
    <property type="match status" value="1"/>
</dbReference>
<dbReference type="HAMAP" id="MF_01959">
    <property type="entry name" value="CcmE"/>
    <property type="match status" value="1"/>
</dbReference>
<dbReference type="InterPro" id="IPR004329">
    <property type="entry name" value="CcmE"/>
</dbReference>
<dbReference type="InterPro" id="IPR036127">
    <property type="entry name" value="CcmE-like_sf"/>
</dbReference>
<dbReference type="InterPro" id="IPR012340">
    <property type="entry name" value="NA-bd_OB-fold"/>
</dbReference>
<dbReference type="NCBIfam" id="NF009727">
    <property type="entry name" value="PRK13254.1-1"/>
    <property type="match status" value="1"/>
</dbReference>
<dbReference type="NCBIfam" id="NF009729">
    <property type="entry name" value="PRK13254.1-3"/>
    <property type="match status" value="1"/>
</dbReference>
<dbReference type="NCBIfam" id="NF009731">
    <property type="entry name" value="PRK13254.1-5"/>
    <property type="match status" value="1"/>
</dbReference>
<dbReference type="PANTHER" id="PTHR34128">
    <property type="entry name" value="CYTOCHROME C-TYPE BIOGENESIS PROTEIN CCME HOMOLOG, MITOCHONDRIAL"/>
    <property type="match status" value="1"/>
</dbReference>
<dbReference type="PANTHER" id="PTHR34128:SF2">
    <property type="entry name" value="CYTOCHROME C-TYPE BIOGENESIS PROTEIN CCME HOMOLOG, MITOCHONDRIAL"/>
    <property type="match status" value="1"/>
</dbReference>
<dbReference type="Pfam" id="PF03100">
    <property type="entry name" value="CcmE"/>
    <property type="match status" value="1"/>
</dbReference>
<dbReference type="SUPFAM" id="SSF82093">
    <property type="entry name" value="Heme chaperone CcmE"/>
    <property type="match status" value="1"/>
</dbReference>
<accession>A5W0P1</accession>
<protein>
    <recommendedName>
        <fullName evidence="1">Cytochrome c-type biogenesis protein CcmE</fullName>
    </recommendedName>
    <alternativeName>
        <fullName evidence="1">Cytochrome c maturation protein E</fullName>
    </alternativeName>
    <alternativeName>
        <fullName evidence="1">Heme chaperone CcmE</fullName>
    </alternativeName>
</protein>
<sequence>MNPQRKKRLLLIVGLLVGVGVAVGFALSALQQNINLFYTPTQIANGEAPLDTRIRAGGMVEKGSVQRSADSLDVRFVVTDFNKSVPITYRGILPDLFREGQGIVALGKLNADGVVVADEVLAKHDEKYMPPEVTKALKESGQAAAGGETKP</sequence>
<evidence type="ECO:0000255" key="1">
    <source>
        <dbReference type="HAMAP-Rule" id="MF_01959"/>
    </source>
</evidence>
<gene>
    <name evidence="1" type="primary">ccmE</name>
    <name evidence="1" type="synonym">cycJ</name>
    <name type="ordered locus">Pput_1544</name>
</gene>
<proteinExistence type="inferred from homology"/>